<sequence>MTTKKQPDSTIALNRKAGFDYFIEDQYEAGLVLEGWEVKSLRAGKINLSDSHVIIKYGEAFLLGAQIQPLPTASTHFIPDPIRTRKLLMNKKELNHLIGSVERQGYTIVPLSLYWKKNKIKIKIALAKGKKEHDKRDTIKDREWQRDRSRIMKKNT</sequence>
<reference key="1">
    <citation type="submission" date="2006-11" db="EMBL/GenBank/DDBJ databases">
        <title>Identification and characterization of a new conjugation/ type IVA secretion system (trb/tra) of L. pneumophila Corby localized on a mobile genomic island.</title>
        <authorList>
            <person name="Gloeckner G."/>
            <person name="Albert-Weissenberger C."/>
            <person name="Weinmann E."/>
            <person name="Jacobi S."/>
            <person name="Schunder E."/>
            <person name="Steinert M."/>
            <person name="Buchrieser C."/>
            <person name="Hacker J."/>
            <person name="Heuner K."/>
        </authorList>
    </citation>
    <scope>NUCLEOTIDE SEQUENCE [LARGE SCALE GENOMIC DNA]</scope>
    <source>
        <strain>Corby</strain>
    </source>
</reference>
<name>SSRP_LEGPC</name>
<comment type="function">
    <text evidence="1">Required for rescue of stalled ribosomes mediated by trans-translation. Binds to transfer-messenger RNA (tmRNA), required for stable association of tmRNA with ribosomes. tmRNA and SmpB together mimic tRNA shape, replacing the anticodon stem-loop with SmpB. tmRNA is encoded by the ssrA gene; the 2 termini fold to resemble tRNA(Ala) and it encodes a 'tag peptide', a short internal open reading frame. During trans-translation Ala-aminoacylated tmRNA acts like a tRNA, entering the A-site of stalled ribosomes, displacing the stalled mRNA. The ribosome then switches to translate the ORF on the tmRNA; the nascent peptide is terminated with the 'tag peptide' encoded by the tmRNA and targeted for degradation. The ribosome is freed to recommence translation, which seems to be the essential function of trans-translation.</text>
</comment>
<comment type="subcellular location">
    <subcellularLocation>
        <location evidence="1">Cytoplasm</location>
    </subcellularLocation>
    <text evidence="1">The tmRNA-SmpB complex associates with stalled 70S ribosomes.</text>
</comment>
<comment type="similarity">
    <text evidence="1">Belongs to the SmpB family.</text>
</comment>
<evidence type="ECO:0000255" key="1">
    <source>
        <dbReference type="HAMAP-Rule" id="MF_00023"/>
    </source>
</evidence>
<evidence type="ECO:0000256" key="2">
    <source>
        <dbReference type="SAM" id="MobiDB-lite"/>
    </source>
</evidence>
<protein>
    <recommendedName>
        <fullName evidence="1">SsrA-binding protein</fullName>
    </recommendedName>
    <alternativeName>
        <fullName evidence="1">Small protein B</fullName>
    </alternativeName>
</protein>
<accession>A5II10</accession>
<organism>
    <name type="scientific">Legionella pneumophila (strain Corby)</name>
    <dbReference type="NCBI Taxonomy" id="400673"/>
    <lineage>
        <taxon>Bacteria</taxon>
        <taxon>Pseudomonadati</taxon>
        <taxon>Pseudomonadota</taxon>
        <taxon>Gammaproteobacteria</taxon>
        <taxon>Legionellales</taxon>
        <taxon>Legionellaceae</taxon>
        <taxon>Legionella</taxon>
    </lineage>
</organism>
<proteinExistence type="inferred from homology"/>
<gene>
    <name evidence="1" type="primary">smpB</name>
    <name type="ordered locus">LPC_3123</name>
</gene>
<feature type="chain" id="PRO_1000002076" description="SsrA-binding protein">
    <location>
        <begin position="1"/>
        <end position="156"/>
    </location>
</feature>
<feature type="region of interest" description="Disordered" evidence="2">
    <location>
        <begin position="135"/>
        <end position="156"/>
    </location>
</feature>
<feature type="compositionally biased region" description="Basic and acidic residues" evidence="2">
    <location>
        <begin position="135"/>
        <end position="150"/>
    </location>
</feature>
<keyword id="KW-0963">Cytoplasm</keyword>
<keyword id="KW-0694">RNA-binding</keyword>
<dbReference type="EMBL" id="CP000675">
    <property type="protein sequence ID" value="ABQ57010.1"/>
    <property type="molecule type" value="Genomic_DNA"/>
</dbReference>
<dbReference type="RefSeq" id="WP_010948526.1">
    <property type="nucleotide sequence ID" value="NZ_JAPMSS010000004.1"/>
</dbReference>
<dbReference type="SMR" id="A5II10"/>
<dbReference type="GeneID" id="57036837"/>
<dbReference type="KEGG" id="lpc:LPC_3123"/>
<dbReference type="HOGENOM" id="CLU_108953_3_0_6"/>
<dbReference type="GO" id="GO:0005829">
    <property type="term" value="C:cytosol"/>
    <property type="evidence" value="ECO:0007669"/>
    <property type="project" value="TreeGrafter"/>
</dbReference>
<dbReference type="GO" id="GO:0003723">
    <property type="term" value="F:RNA binding"/>
    <property type="evidence" value="ECO:0007669"/>
    <property type="project" value="UniProtKB-UniRule"/>
</dbReference>
<dbReference type="GO" id="GO:0070929">
    <property type="term" value="P:trans-translation"/>
    <property type="evidence" value="ECO:0007669"/>
    <property type="project" value="UniProtKB-UniRule"/>
</dbReference>
<dbReference type="CDD" id="cd09294">
    <property type="entry name" value="SmpB"/>
    <property type="match status" value="1"/>
</dbReference>
<dbReference type="Gene3D" id="2.40.280.10">
    <property type="match status" value="1"/>
</dbReference>
<dbReference type="HAMAP" id="MF_00023">
    <property type="entry name" value="SmpB"/>
    <property type="match status" value="1"/>
</dbReference>
<dbReference type="InterPro" id="IPR023620">
    <property type="entry name" value="SmpB"/>
</dbReference>
<dbReference type="InterPro" id="IPR000037">
    <property type="entry name" value="SsrA-bd_prot"/>
</dbReference>
<dbReference type="InterPro" id="IPR020081">
    <property type="entry name" value="SsrA-bd_prot_CS"/>
</dbReference>
<dbReference type="NCBIfam" id="NF003843">
    <property type="entry name" value="PRK05422.1"/>
    <property type="match status" value="1"/>
</dbReference>
<dbReference type="NCBIfam" id="TIGR00086">
    <property type="entry name" value="smpB"/>
    <property type="match status" value="1"/>
</dbReference>
<dbReference type="PANTHER" id="PTHR30308:SF2">
    <property type="entry name" value="SSRA-BINDING PROTEIN"/>
    <property type="match status" value="1"/>
</dbReference>
<dbReference type="PANTHER" id="PTHR30308">
    <property type="entry name" value="TMRNA-BINDING COMPONENT OF TRANS-TRANSLATION TAGGING COMPLEX"/>
    <property type="match status" value="1"/>
</dbReference>
<dbReference type="Pfam" id="PF01668">
    <property type="entry name" value="SmpB"/>
    <property type="match status" value="1"/>
</dbReference>
<dbReference type="SUPFAM" id="SSF74982">
    <property type="entry name" value="Small protein B (SmpB)"/>
    <property type="match status" value="1"/>
</dbReference>
<dbReference type="PROSITE" id="PS01317">
    <property type="entry name" value="SSRP"/>
    <property type="match status" value="1"/>
</dbReference>